<protein>
    <recommendedName>
        <fullName>B3 domain-containing protein Os06g0107800</fullName>
    </recommendedName>
</protein>
<keyword id="KW-0238">DNA-binding</keyword>
<keyword id="KW-0539">Nucleus</keyword>
<keyword id="KW-1185">Reference proteome</keyword>
<keyword id="KW-0804">Transcription</keyword>
<keyword id="KW-0805">Transcription regulation</keyword>
<gene>
    <name type="ordered locus">Os06g0107800</name>
    <name type="ordered locus">LOC_Os06g01860</name>
    <name type="ORF">P0514G12.9</name>
    <name type="ORF">P0644B06.53</name>
</gene>
<organism>
    <name type="scientific">Oryza sativa subsp. japonica</name>
    <name type="common">Rice</name>
    <dbReference type="NCBI Taxonomy" id="39947"/>
    <lineage>
        <taxon>Eukaryota</taxon>
        <taxon>Viridiplantae</taxon>
        <taxon>Streptophyta</taxon>
        <taxon>Embryophyta</taxon>
        <taxon>Tracheophyta</taxon>
        <taxon>Spermatophyta</taxon>
        <taxon>Magnoliopsida</taxon>
        <taxon>Liliopsida</taxon>
        <taxon>Poales</taxon>
        <taxon>Poaceae</taxon>
        <taxon>BOP clade</taxon>
        <taxon>Oryzoideae</taxon>
        <taxon>Oryzeae</taxon>
        <taxon>Oryzinae</taxon>
        <taxon>Oryza</taxon>
        <taxon>Oryza sativa</taxon>
    </lineage>
</organism>
<proteinExistence type="inferred from homology"/>
<name>Y6078_ORYSJ</name>
<dbReference type="EMBL" id="AP000616">
    <property type="protein sequence ID" value="BAD67682.1"/>
    <property type="molecule type" value="Genomic_DNA"/>
</dbReference>
<dbReference type="EMBL" id="AP001129">
    <property type="protein sequence ID" value="BAD67720.1"/>
    <property type="molecule type" value="Genomic_DNA"/>
</dbReference>
<dbReference type="EMBL" id="AP008212">
    <property type="protein sequence ID" value="BAF18485.1"/>
    <property type="status" value="ALT_SEQ"/>
    <property type="molecule type" value="Genomic_DNA"/>
</dbReference>
<dbReference type="EMBL" id="AP014962">
    <property type="status" value="NOT_ANNOTATED_CDS"/>
    <property type="molecule type" value="Genomic_DNA"/>
</dbReference>
<dbReference type="RefSeq" id="XP_015642534.1">
    <property type="nucleotide sequence ID" value="XM_015787048.1"/>
</dbReference>
<dbReference type="SMR" id="Q5VS55"/>
<dbReference type="FunCoup" id="Q5VS55">
    <property type="interactions" value="17"/>
</dbReference>
<dbReference type="STRING" id="39947.Q5VS55"/>
<dbReference type="PaxDb" id="39947-Q5VS55"/>
<dbReference type="EnsemblPlants" id="Os06t0107800-02">
    <property type="protein sequence ID" value="Os06t0107800-02"/>
    <property type="gene ID" value="Os06g0107800"/>
</dbReference>
<dbReference type="Gramene" id="Os06t0107800-02">
    <property type="protein sequence ID" value="Os06t0107800-02"/>
    <property type="gene ID" value="Os06g0107800"/>
</dbReference>
<dbReference type="KEGG" id="dosa:Os06g0107800"/>
<dbReference type="eggNOG" id="ENOG502R5VH">
    <property type="taxonomic scope" value="Eukaryota"/>
</dbReference>
<dbReference type="HOGENOM" id="CLU_2053591_0_0_1"/>
<dbReference type="InParanoid" id="Q5VS55"/>
<dbReference type="OrthoDB" id="2020802at2759"/>
<dbReference type="Proteomes" id="UP000000763">
    <property type="component" value="Chromosome 6"/>
</dbReference>
<dbReference type="Proteomes" id="UP000059680">
    <property type="component" value="Chromosome 6"/>
</dbReference>
<dbReference type="ExpressionAtlas" id="Q5VS55">
    <property type="expression patterns" value="differential"/>
</dbReference>
<dbReference type="GO" id="GO:0005634">
    <property type="term" value="C:nucleus"/>
    <property type="evidence" value="ECO:0007669"/>
    <property type="project" value="UniProtKB-SubCell"/>
</dbReference>
<dbReference type="GO" id="GO:0003677">
    <property type="term" value="F:DNA binding"/>
    <property type="evidence" value="ECO:0007669"/>
    <property type="project" value="UniProtKB-KW"/>
</dbReference>
<dbReference type="GO" id="GO:0003700">
    <property type="term" value="F:DNA-binding transcription factor activity"/>
    <property type="evidence" value="ECO:0007669"/>
    <property type="project" value="InterPro"/>
</dbReference>
<dbReference type="CDD" id="cd10017">
    <property type="entry name" value="B3_DNA"/>
    <property type="match status" value="1"/>
</dbReference>
<dbReference type="Gene3D" id="2.40.330.10">
    <property type="entry name" value="DNA-binding pseudobarrel domain"/>
    <property type="match status" value="1"/>
</dbReference>
<dbReference type="InterPro" id="IPR003340">
    <property type="entry name" value="B3_DNA-bd"/>
</dbReference>
<dbReference type="InterPro" id="IPR015300">
    <property type="entry name" value="DNA-bd_pseudobarrel_sf"/>
</dbReference>
<dbReference type="InterPro" id="IPR044800">
    <property type="entry name" value="LEC2-like"/>
</dbReference>
<dbReference type="PANTHER" id="PTHR31140:SF78">
    <property type="entry name" value="B3 DOMAIN-CONTAINING PROTEIN OS06G0107800"/>
    <property type="match status" value="1"/>
</dbReference>
<dbReference type="PANTHER" id="PTHR31140">
    <property type="entry name" value="B3 DOMAIN-CONTAINING TRANSCRIPTION FACTOR ABI3"/>
    <property type="match status" value="1"/>
</dbReference>
<dbReference type="Pfam" id="PF02362">
    <property type="entry name" value="B3"/>
    <property type="match status" value="1"/>
</dbReference>
<dbReference type="SMART" id="SM01019">
    <property type="entry name" value="B3"/>
    <property type="match status" value="1"/>
</dbReference>
<dbReference type="SUPFAM" id="SSF101936">
    <property type="entry name" value="DNA-binding pseudobarrel domain"/>
    <property type="match status" value="1"/>
</dbReference>
<dbReference type="PROSITE" id="PS50863">
    <property type="entry name" value="B3"/>
    <property type="match status" value="1"/>
</dbReference>
<sequence length="199" mass="21586">MATIVAWESRNLQLQGGGGGHGGGGGGGGGERREYMFEKVVTPSDVGKLNRLVVPKHYAEKYFPLGPAARTSPAGTVLCFEDARGGDSTWRFRYSYWSSSQSYVITKGWSRYVRDKRLAAGDTVSFCRAGARLFIDCRKRAASVSSSSLVPPALIKVQLPPSRPVVDEEEAACGRRCLRLFGVDLQLRADASPALDLQL</sequence>
<feature type="chain" id="PRO_0000376970" description="B3 domain-containing protein Os06g0107800">
    <location>
        <begin position="1"/>
        <end position="199"/>
    </location>
</feature>
<feature type="DNA-binding region" description="TF-B3" evidence="1">
    <location>
        <begin position="37"/>
        <end position="141"/>
    </location>
</feature>
<feature type="region of interest" description="Disordered" evidence="2">
    <location>
        <begin position="13"/>
        <end position="32"/>
    </location>
</feature>
<feature type="compositionally biased region" description="Gly residues" evidence="2">
    <location>
        <begin position="15"/>
        <end position="29"/>
    </location>
</feature>
<accession>Q5VS55</accession>
<accession>Q0DF88</accession>
<comment type="subcellular location">
    <subcellularLocation>
        <location evidence="1">Nucleus</location>
    </subcellularLocation>
</comment>
<comment type="sequence caution" evidence="3">
    <conflict type="erroneous gene model prediction">
        <sequence resource="EMBL-CDS" id="BAF18485"/>
    </conflict>
</comment>
<evidence type="ECO:0000255" key="1">
    <source>
        <dbReference type="PROSITE-ProRule" id="PRU00326"/>
    </source>
</evidence>
<evidence type="ECO:0000256" key="2">
    <source>
        <dbReference type="SAM" id="MobiDB-lite"/>
    </source>
</evidence>
<evidence type="ECO:0000305" key="3"/>
<reference key="1">
    <citation type="journal article" date="2005" name="Nature">
        <title>The map-based sequence of the rice genome.</title>
        <authorList>
            <consortium name="International rice genome sequencing project (IRGSP)"/>
        </authorList>
    </citation>
    <scope>NUCLEOTIDE SEQUENCE [LARGE SCALE GENOMIC DNA]</scope>
    <source>
        <strain>cv. Nipponbare</strain>
    </source>
</reference>
<reference key="2">
    <citation type="journal article" date="2008" name="Nucleic Acids Res.">
        <title>The rice annotation project database (RAP-DB): 2008 update.</title>
        <authorList>
            <consortium name="The rice annotation project (RAP)"/>
        </authorList>
    </citation>
    <scope>GENOME REANNOTATION</scope>
    <source>
        <strain>cv. Nipponbare</strain>
    </source>
</reference>
<reference key="3">
    <citation type="journal article" date="2013" name="Rice">
        <title>Improvement of the Oryza sativa Nipponbare reference genome using next generation sequence and optical map data.</title>
        <authorList>
            <person name="Kawahara Y."/>
            <person name="de la Bastide M."/>
            <person name="Hamilton J.P."/>
            <person name="Kanamori H."/>
            <person name="McCombie W.R."/>
            <person name="Ouyang S."/>
            <person name="Schwartz D.C."/>
            <person name="Tanaka T."/>
            <person name="Wu J."/>
            <person name="Zhou S."/>
            <person name="Childs K.L."/>
            <person name="Davidson R.M."/>
            <person name="Lin H."/>
            <person name="Quesada-Ocampo L."/>
            <person name="Vaillancourt B."/>
            <person name="Sakai H."/>
            <person name="Lee S.S."/>
            <person name="Kim J."/>
            <person name="Numa H."/>
            <person name="Itoh T."/>
            <person name="Buell C.R."/>
            <person name="Matsumoto T."/>
        </authorList>
    </citation>
    <scope>GENOME REANNOTATION</scope>
    <source>
        <strain>cv. Nipponbare</strain>
    </source>
</reference>